<comment type="function">
    <text evidence="1">Binds 23S rRNA and is also seen to make contacts with the A and possibly P site tRNAs.</text>
</comment>
<comment type="subunit">
    <text evidence="1">Part of the 50S ribosomal subunit.</text>
</comment>
<comment type="similarity">
    <text evidence="1">Belongs to the universal ribosomal protein uL16 family.</text>
</comment>
<dbReference type="EMBL" id="AE006468">
    <property type="protein sequence ID" value="AAL22296.1"/>
    <property type="molecule type" value="Genomic_DNA"/>
</dbReference>
<dbReference type="RefSeq" id="NP_462337.1">
    <property type="nucleotide sequence ID" value="NC_003197.2"/>
</dbReference>
<dbReference type="RefSeq" id="WP_000941208.1">
    <property type="nucleotide sequence ID" value="NC_003197.2"/>
</dbReference>
<dbReference type="SMR" id="Q7CPL4"/>
<dbReference type="STRING" id="99287.STM3433"/>
<dbReference type="PaxDb" id="99287-STM3433"/>
<dbReference type="GeneID" id="1254956"/>
<dbReference type="GeneID" id="93035738"/>
<dbReference type="KEGG" id="stm:STM3433"/>
<dbReference type="PATRIC" id="fig|99287.12.peg.3630"/>
<dbReference type="HOGENOM" id="CLU_078858_2_1_6"/>
<dbReference type="OMA" id="KGAVEYW"/>
<dbReference type="PhylomeDB" id="Q7CPL4"/>
<dbReference type="BioCyc" id="SENT99287:STM3433-MONOMER"/>
<dbReference type="PRO" id="PR:Q7CPL4"/>
<dbReference type="Proteomes" id="UP000001014">
    <property type="component" value="Chromosome"/>
</dbReference>
<dbReference type="GO" id="GO:0022625">
    <property type="term" value="C:cytosolic large ribosomal subunit"/>
    <property type="evidence" value="ECO:0000318"/>
    <property type="project" value="GO_Central"/>
</dbReference>
<dbReference type="GO" id="GO:0019843">
    <property type="term" value="F:rRNA binding"/>
    <property type="evidence" value="ECO:0000318"/>
    <property type="project" value="GO_Central"/>
</dbReference>
<dbReference type="GO" id="GO:0003735">
    <property type="term" value="F:structural constituent of ribosome"/>
    <property type="evidence" value="ECO:0000318"/>
    <property type="project" value="GO_Central"/>
</dbReference>
<dbReference type="GO" id="GO:0000049">
    <property type="term" value="F:tRNA binding"/>
    <property type="evidence" value="ECO:0007669"/>
    <property type="project" value="UniProtKB-KW"/>
</dbReference>
<dbReference type="GO" id="GO:0006412">
    <property type="term" value="P:translation"/>
    <property type="evidence" value="ECO:0007669"/>
    <property type="project" value="UniProtKB-UniRule"/>
</dbReference>
<dbReference type="CDD" id="cd01433">
    <property type="entry name" value="Ribosomal_L16_L10e"/>
    <property type="match status" value="1"/>
</dbReference>
<dbReference type="FunFam" id="3.90.1170.10:FF:000001">
    <property type="entry name" value="50S ribosomal protein L16"/>
    <property type="match status" value="1"/>
</dbReference>
<dbReference type="Gene3D" id="3.90.1170.10">
    <property type="entry name" value="Ribosomal protein L10e/L16"/>
    <property type="match status" value="1"/>
</dbReference>
<dbReference type="HAMAP" id="MF_01342">
    <property type="entry name" value="Ribosomal_uL16"/>
    <property type="match status" value="1"/>
</dbReference>
<dbReference type="InterPro" id="IPR047873">
    <property type="entry name" value="Ribosomal_uL16"/>
</dbReference>
<dbReference type="InterPro" id="IPR000114">
    <property type="entry name" value="Ribosomal_uL16_bact-type"/>
</dbReference>
<dbReference type="InterPro" id="IPR020798">
    <property type="entry name" value="Ribosomal_uL16_CS"/>
</dbReference>
<dbReference type="InterPro" id="IPR016180">
    <property type="entry name" value="Ribosomal_uL16_dom"/>
</dbReference>
<dbReference type="InterPro" id="IPR036920">
    <property type="entry name" value="Ribosomal_uL16_sf"/>
</dbReference>
<dbReference type="NCBIfam" id="TIGR01164">
    <property type="entry name" value="rplP_bact"/>
    <property type="match status" value="1"/>
</dbReference>
<dbReference type="PANTHER" id="PTHR12220">
    <property type="entry name" value="50S/60S RIBOSOMAL PROTEIN L16"/>
    <property type="match status" value="1"/>
</dbReference>
<dbReference type="PANTHER" id="PTHR12220:SF13">
    <property type="entry name" value="LARGE RIBOSOMAL SUBUNIT PROTEIN UL16M"/>
    <property type="match status" value="1"/>
</dbReference>
<dbReference type="Pfam" id="PF00252">
    <property type="entry name" value="Ribosomal_L16"/>
    <property type="match status" value="1"/>
</dbReference>
<dbReference type="PRINTS" id="PR00060">
    <property type="entry name" value="RIBOSOMALL16"/>
</dbReference>
<dbReference type="SUPFAM" id="SSF54686">
    <property type="entry name" value="Ribosomal protein L16p/L10e"/>
    <property type="match status" value="1"/>
</dbReference>
<dbReference type="PROSITE" id="PS00586">
    <property type="entry name" value="RIBOSOMAL_L16_1"/>
    <property type="match status" value="1"/>
</dbReference>
<dbReference type="PROSITE" id="PS00701">
    <property type="entry name" value="RIBOSOMAL_L16_2"/>
    <property type="match status" value="1"/>
</dbReference>
<gene>
    <name evidence="1" type="primary">rplP</name>
    <name type="ordered locus">STM3433</name>
</gene>
<accession>Q7CPL4</accession>
<sequence>MLQPKRTKFRKMHKGRNRGLAAGADVSFGSFGLKAVGRGRLTARQIEAARRAMTRAVKRQGKIWIRVFPDKPITEKPLAVRMGKGKGNVEYWVALIQPGKVLYEMDGVPEELAREAFKLAAAKLPIKTTFVTKTVM</sequence>
<keyword id="KW-1185">Reference proteome</keyword>
<keyword id="KW-0687">Ribonucleoprotein</keyword>
<keyword id="KW-0689">Ribosomal protein</keyword>
<keyword id="KW-0694">RNA-binding</keyword>
<keyword id="KW-0699">rRNA-binding</keyword>
<keyword id="KW-0820">tRNA-binding</keyword>
<feature type="chain" id="PRO_0000062194" description="Large ribosomal subunit protein uL16">
    <location>
        <begin position="1"/>
        <end position="136"/>
    </location>
</feature>
<organism>
    <name type="scientific">Salmonella typhimurium (strain LT2 / SGSC1412 / ATCC 700720)</name>
    <dbReference type="NCBI Taxonomy" id="99287"/>
    <lineage>
        <taxon>Bacteria</taxon>
        <taxon>Pseudomonadati</taxon>
        <taxon>Pseudomonadota</taxon>
        <taxon>Gammaproteobacteria</taxon>
        <taxon>Enterobacterales</taxon>
        <taxon>Enterobacteriaceae</taxon>
        <taxon>Salmonella</taxon>
    </lineage>
</organism>
<evidence type="ECO:0000255" key="1">
    <source>
        <dbReference type="HAMAP-Rule" id="MF_01342"/>
    </source>
</evidence>
<evidence type="ECO:0000305" key="2"/>
<reference key="1">
    <citation type="journal article" date="2001" name="Nature">
        <title>Complete genome sequence of Salmonella enterica serovar Typhimurium LT2.</title>
        <authorList>
            <person name="McClelland M."/>
            <person name="Sanderson K.E."/>
            <person name="Spieth J."/>
            <person name="Clifton S.W."/>
            <person name="Latreille P."/>
            <person name="Courtney L."/>
            <person name="Porwollik S."/>
            <person name="Ali J."/>
            <person name="Dante M."/>
            <person name="Du F."/>
            <person name="Hou S."/>
            <person name="Layman D."/>
            <person name="Leonard S."/>
            <person name="Nguyen C."/>
            <person name="Scott K."/>
            <person name="Holmes A."/>
            <person name="Grewal N."/>
            <person name="Mulvaney E."/>
            <person name="Ryan E."/>
            <person name="Sun H."/>
            <person name="Florea L."/>
            <person name="Miller W."/>
            <person name="Stoneking T."/>
            <person name="Nhan M."/>
            <person name="Waterston R."/>
            <person name="Wilson R.K."/>
        </authorList>
    </citation>
    <scope>NUCLEOTIDE SEQUENCE [LARGE SCALE GENOMIC DNA]</scope>
    <source>
        <strain>LT2 / SGSC1412 / ATCC 700720</strain>
    </source>
</reference>
<proteinExistence type="inferred from homology"/>
<name>RL16_SALTY</name>
<protein>
    <recommendedName>
        <fullName evidence="1">Large ribosomal subunit protein uL16</fullName>
    </recommendedName>
    <alternativeName>
        <fullName evidence="2">50S ribosomal protein L16</fullName>
    </alternativeName>
</protein>